<gene>
    <name evidence="1" type="primary">bamE</name>
    <name type="synonym">smpA</name>
    <name type="ordered locus">STM2685</name>
</gene>
<comment type="function">
    <text evidence="1">Part of the outer membrane protein assembly complex, which is involved in assembly and insertion of beta-barrel proteins into the outer membrane.</text>
</comment>
<comment type="subunit">
    <text evidence="1">Part of the Bam complex, which is composed of the outer membrane protein BamA, and four lipoproteins BamB, BamC, BamD and BamE.</text>
</comment>
<comment type="subcellular location">
    <subcellularLocation>
        <location evidence="1">Cell outer membrane</location>
        <topology evidence="1">Lipid-anchor</topology>
    </subcellularLocation>
</comment>
<comment type="similarity">
    <text evidence="1">Belongs to the BamE family.</text>
</comment>
<sequence>MRCKTLTAAAAVLLMLTAGCSTLERVVYRPDINQGNYLTPTDVAKVRVGMTQQQVAYALGTPMMTDPFGTNTWFYVFRQQPGHENVTQQTLTLTFNSSGVLTNIDNKPALTK</sequence>
<keyword id="KW-0998">Cell outer membrane</keyword>
<keyword id="KW-0449">Lipoprotein</keyword>
<keyword id="KW-0472">Membrane</keyword>
<keyword id="KW-0564">Palmitate</keyword>
<keyword id="KW-1185">Reference proteome</keyword>
<keyword id="KW-0732">Signal</keyword>
<proteinExistence type="inferred from homology"/>
<dbReference type="EMBL" id="AE006468">
    <property type="protein sequence ID" value="AAL21574.1"/>
    <property type="molecule type" value="Genomic_DNA"/>
</dbReference>
<dbReference type="RefSeq" id="NP_461615.1">
    <property type="nucleotide sequence ID" value="NC_003197.2"/>
</dbReference>
<dbReference type="RefSeq" id="WP_001203445.1">
    <property type="nucleotide sequence ID" value="NC_003197.2"/>
</dbReference>
<dbReference type="SMR" id="Q7CPZ3"/>
<dbReference type="STRING" id="99287.STM2685"/>
<dbReference type="PaxDb" id="99287-STM2685"/>
<dbReference type="GeneID" id="1254208"/>
<dbReference type="KEGG" id="stm:STM2685"/>
<dbReference type="PATRIC" id="fig|99287.12.peg.2830"/>
<dbReference type="HOGENOM" id="CLU_083835_4_0_6"/>
<dbReference type="OMA" id="FGSNVWY"/>
<dbReference type="PhylomeDB" id="Q7CPZ3"/>
<dbReference type="BioCyc" id="SENT99287:STM2685-MONOMER"/>
<dbReference type="Proteomes" id="UP000001014">
    <property type="component" value="Chromosome"/>
</dbReference>
<dbReference type="GO" id="GO:1990063">
    <property type="term" value="C:Bam protein complex"/>
    <property type="evidence" value="ECO:0000318"/>
    <property type="project" value="GO_Central"/>
</dbReference>
<dbReference type="GO" id="GO:0030674">
    <property type="term" value="F:protein-macromolecule adaptor activity"/>
    <property type="evidence" value="ECO:0000318"/>
    <property type="project" value="GO_Central"/>
</dbReference>
<dbReference type="GO" id="GO:0043165">
    <property type="term" value="P:Gram-negative-bacterium-type cell outer membrane assembly"/>
    <property type="evidence" value="ECO:0000318"/>
    <property type="project" value="GO_Central"/>
</dbReference>
<dbReference type="GO" id="GO:0051205">
    <property type="term" value="P:protein insertion into membrane"/>
    <property type="evidence" value="ECO:0000318"/>
    <property type="project" value="GO_Central"/>
</dbReference>
<dbReference type="FunFam" id="3.30.1450.10:FF:000001">
    <property type="entry name" value="Outer membrane protein assembly factor BamE"/>
    <property type="match status" value="1"/>
</dbReference>
<dbReference type="Gene3D" id="3.30.1450.10">
    <property type="match status" value="1"/>
</dbReference>
<dbReference type="HAMAP" id="MF_00925">
    <property type="entry name" value="OM_assembly_BamE"/>
    <property type="match status" value="1"/>
</dbReference>
<dbReference type="InterPro" id="IPR026592">
    <property type="entry name" value="BamE"/>
</dbReference>
<dbReference type="InterPro" id="IPR037873">
    <property type="entry name" value="BamE-like"/>
</dbReference>
<dbReference type="InterPro" id="IPR007450">
    <property type="entry name" value="BamE_dom"/>
</dbReference>
<dbReference type="NCBIfam" id="NF008585">
    <property type="entry name" value="PRK11548.1"/>
    <property type="match status" value="1"/>
</dbReference>
<dbReference type="PANTHER" id="PTHR37482">
    <property type="entry name" value="OUTER MEMBRANE PROTEIN ASSEMBLY FACTOR BAME"/>
    <property type="match status" value="1"/>
</dbReference>
<dbReference type="PANTHER" id="PTHR37482:SF1">
    <property type="entry name" value="OUTER MEMBRANE PROTEIN ASSEMBLY FACTOR BAME"/>
    <property type="match status" value="1"/>
</dbReference>
<dbReference type="Pfam" id="PF04355">
    <property type="entry name" value="BamE"/>
    <property type="match status" value="1"/>
</dbReference>
<dbReference type="PROSITE" id="PS51257">
    <property type="entry name" value="PROKAR_LIPOPROTEIN"/>
    <property type="match status" value="1"/>
</dbReference>
<protein>
    <recommendedName>
        <fullName evidence="1">Outer membrane protein assembly factor BamE</fullName>
    </recommendedName>
</protein>
<organism>
    <name type="scientific">Salmonella typhimurium (strain LT2 / SGSC1412 / ATCC 700720)</name>
    <dbReference type="NCBI Taxonomy" id="99287"/>
    <lineage>
        <taxon>Bacteria</taxon>
        <taxon>Pseudomonadati</taxon>
        <taxon>Pseudomonadota</taxon>
        <taxon>Gammaproteobacteria</taxon>
        <taxon>Enterobacterales</taxon>
        <taxon>Enterobacteriaceae</taxon>
        <taxon>Salmonella</taxon>
    </lineage>
</organism>
<feature type="signal peptide" evidence="1">
    <location>
        <begin position="1"/>
        <end position="19"/>
    </location>
</feature>
<feature type="chain" id="PRO_0000417868" description="Outer membrane protein assembly factor BamE">
    <location>
        <begin position="20"/>
        <end position="112"/>
    </location>
</feature>
<feature type="lipid moiety-binding region" description="N-palmitoyl cysteine" evidence="1">
    <location>
        <position position="20"/>
    </location>
</feature>
<feature type="lipid moiety-binding region" description="S-diacylglycerol cysteine" evidence="1">
    <location>
        <position position="20"/>
    </location>
</feature>
<accession>Q7CPZ3</accession>
<reference key="1">
    <citation type="journal article" date="2001" name="Nature">
        <title>Complete genome sequence of Salmonella enterica serovar Typhimurium LT2.</title>
        <authorList>
            <person name="McClelland M."/>
            <person name="Sanderson K.E."/>
            <person name="Spieth J."/>
            <person name="Clifton S.W."/>
            <person name="Latreille P."/>
            <person name="Courtney L."/>
            <person name="Porwollik S."/>
            <person name="Ali J."/>
            <person name="Dante M."/>
            <person name="Du F."/>
            <person name="Hou S."/>
            <person name="Layman D."/>
            <person name="Leonard S."/>
            <person name="Nguyen C."/>
            <person name="Scott K."/>
            <person name="Holmes A."/>
            <person name="Grewal N."/>
            <person name="Mulvaney E."/>
            <person name="Ryan E."/>
            <person name="Sun H."/>
            <person name="Florea L."/>
            <person name="Miller W."/>
            <person name="Stoneking T."/>
            <person name="Nhan M."/>
            <person name="Waterston R."/>
            <person name="Wilson R.K."/>
        </authorList>
    </citation>
    <scope>NUCLEOTIDE SEQUENCE [LARGE SCALE GENOMIC DNA]</scope>
    <source>
        <strain>LT2 / SGSC1412 / ATCC 700720</strain>
    </source>
</reference>
<name>BAME_SALTY</name>
<evidence type="ECO:0000255" key="1">
    <source>
        <dbReference type="HAMAP-Rule" id="MF_00925"/>
    </source>
</evidence>